<reference key="1">
    <citation type="submission" date="2007-07" db="EMBL/GenBank/DDBJ databases">
        <authorList>
            <consortium name="NIH - Mammalian Gene Collection (MGC) project"/>
        </authorList>
    </citation>
    <scope>NUCLEOTIDE SEQUENCE [LARGE SCALE MRNA]</scope>
    <source>
        <strain>Hereford</strain>
        <tissue>Hypothalamus</tissue>
    </source>
</reference>
<organism>
    <name type="scientific">Bos taurus</name>
    <name type="common">Bovine</name>
    <dbReference type="NCBI Taxonomy" id="9913"/>
    <lineage>
        <taxon>Eukaryota</taxon>
        <taxon>Metazoa</taxon>
        <taxon>Chordata</taxon>
        <taxon>Craniata</taxon>
        <taxon>Vertebrata</taxon>
        <taxon>Euteleostomi</taxon>
        <taxon>Mammalia</taxon>
        <taxon>Eutheria</taxon>
        <taxon>Laurasiatheria</taxon>
        <taxon>Artiodactyla</taxon>
        <taxon>Ruminantia</taxon>
        <taxon>Pecora</taxon>
        <taxon>Bovidae</taxon>
        <taxon>Bovinae</taxon>
        <taxon>Bos</taxon>
    </lineage>
</organism>
<gene>
    <name type="primary">TAF8</name>
</gene>
<evidence type="ECO:0000250" key="1"/>
<evidence type="ECO:0000250" key="2">
    <source>
        <dbReference type="UniProtKB" id="Q7Z7C8"/>
    </source>
</evidence>
<evidence type="ECO:0000250" key="3">
    <source>
        <dbReference type="UniProtKB" id="Q9EQH4"/>
    </source>
</evidence>
<evidence type="ECO:0000255" key="4"/>
<evidence type="ECO:0000256" key="5">
    <source>
        <dbReference type="SAM" id="MobiDB-lite"/>
    </source>
</evidence>
<evidence type="ECO:0000305" key="6"/>
<name>TAF8_BOVIN</name>
<accession>A7MAZ4</accession>
<feature type="initiator methionine" description="Removed" evidence="2">
    <location>
        <position position="1"/>
    </location>
</feature>
<feature type="chain" id="PRO_0000315397" description="Transcription initiation factor TFIID subunit 8">
    <location>
        <begin position="2"/>
        <end position="310"/>
    </location>
</feature>
<feature type="domain" description="Histone-fold">
    <location>
        <begin position="35"/>
        <end position="102"/>
    </location>
</feature>
<feature type="region of interest" description="Disordered" evidence="5">
    <location>
        <begin position="1"/>
        <end position="29"/>
    </location>
</feature>
<feature type="region of interest" description="Disordered" evidence="5">
    <location>
        <begin position="235"/>
        <end position="310"/>
    </location>
</feature>
<feature type="short sequence motif" description="Nuclear localization signal" evidence="4">
    <location>
        <begin position="294"/>
        <end position="307"/>
    </location>
</feature>
<feature type="compositionally biased region" description="Low complexity" evidence="5">
    <location>
        <begin position="1"/>
        <end position="19"/>
    </location>
</feature>
<feature type="compositionally biased region" description="Acidic residues" evidence="5">
    <location>
        <begin position="236"/>
        <end position="250"/>
    </location>
</feature>
<feature type="compositionally biased region" description="Polar residues" evidence="5">
    <location>
        <begin position="270"/>
        <end position="283"/>
    </location>
</feature>
<feature type="compositionally biased region" description="Basic residues" evidence="5">
    <location>
        <begin position="297"/>
        <end position="310"/>
    </location>
</feature>
<feature type="modified residue" description="N-acetylalanine" evidence="2">
    <location>
        <position position="2"/>
    </location>
</feature>
<feature type="modified residue" description="Phosphothreonine" evidence="2">
    <location>
        <position position="130"/>
    </location>
</feature>
<feature type="modified residue" description="Phosphoserine" evidence="2">
    <location>
        <position position="271"/>
    </location>
</feature>
<dbReference type="EMBL" id="BC151255">
    <property type="protein sequence ID" value="AAI51256.1"/>
    <property type="molecule type" value="mRNA"/>
</dbReference>
<dbReference type="RefSeq" id="NP_001094670.1">
    <property type="nucleotide sequence ID" value="NM_001101200.2"/>
</dbReference>
<dbReference type="SMR" id="A7MAZ4"/>
<dbReference type="FunCoup" id="A7MAZ4">
    <property type="interactions" value="4343"/>
</dbReference>
<dbReference type="STRING" id="9913.ENSBTAP00000035931"/>
<dbReference type="PaxDb" id="9913-ENSBTAP00000035931"/>
<dbReference type="Ensembl" id="ENSBTAT00000036067.4">
    <property type="protein sequence ID" value="ENSBTAP00000035931.3"/>
    <property type="gene ID" value="ENSBTAG00000011339.6"/>
</dbReference>
<dbReference type="GeneID" id="539938"/>
<dbReference type="KEGG" id="bta:539938"/>
<dbReference type="CTD" id="129685"/>
<dbReference type="VEuPathDB" id="HostDB:ENSBTAG00000011339"/>
<dbReference type="VGNC" id="VGNC:35581">
    <property type="gene designation" value="TAF8"/>
</dbReference>
<dbReference type="eggNOG" id="KOG4336">
    <property type="taxonomic scope" value="Eukaryota"/>
</dbReference>
<dbReference type="GeneTree" id="ENSGT00390000017567"/>
<dbReference type="HOGENOM" id="CLU_070829_0_0_1"/>
<dbReference type="InParanoid" id="A7MAZ4"/>
<dbReference type="OMA" id="SAHNYCE"/>
<dbReference type="OrthoDB" id="2193813at2759"/>
<dbReference type="TreeFam" id="TF316311"/>
<dbReference type="Reactome" id="R-BTA-6807505">
    <property type="pathway name" value="RNA polymerase II transcribes snRNA genes"/>
</dbReference>
<dbReference type="Proteomes" id="UP000009136">
    <property type="component" value="Chromosome 23"/>
</dbReference>
<dbReference type="Bgee" id="ENSBTAG00000011339">
    <property type="expression patterns" value="Expressed in abomasum and 106 other cell types or tissues"/>
</dbReference>
<dbReference type="GO" id="GO:0005737">
    <property type="term" value="C:cytoplasm"/>
    <property type="evidence" value="ECO:0007669"/>
    <property type="project" value="UniProtKB-SubCell"/>
</dbReference>
<dbReference type="GO" id="GO:0005669">
    <property type="term" value="C:transcription factor TFIID complex"/>
    <property type="evidence" value="ECO:0000250"/>
    <property type="project" value="UniProtKB"/>
</dbReference>
<dbReference type="GO" id="GO:0046982">
    <property type="term" value="F:protein heterodimerization activity"/>
    <property type="evidence" value="ECO:0007669"/>
    <property type="project" value="InterPro"/>
</dbReference>
<dbReference type="GO" id="GO:0030154">
    <property type="term" value="P:cell differentiation"/>
    <property type="evidence" value="ECO:0007669"/>
    <property type="project" value="UniProtKB-KW"/>
</dbReference>
<dbReference type="GO" id="GO:0006367">
    <property type="term" value="P:transcription initiation at RNA polymerase II promoter"/>
    <property type="evidence" value="ECO:0000318"/>
    <property type="project" value="GO_Central"/>
</dbReference>
<dbReference type="CDD" id="cd22918">
    <property type="entry name" value="HFD_TAF8"/>
    <property type="match status" value="1"/>
</dbReference>
<dbReference type="CDD" id="cd08049">
    <property type="entry name" value="TAF8"/>
    <property type="match status" value="1"/>
</dbReference>
<dbReference type="FunFam" id="1.10.20.10:FF:000031">
    <property type="entry name" value="transcription initiation factor TFIID subunit 8 isoform X2"/>
    <property type="match status" value="1"/>
</dbReference>
<dbReference type="Gene3D" id="1.10.20.10">
    <property type="entry name" value="Histone, subunit A"/>
    <property type="match status" value="1"/>
</dbReference>
<dbReference type="InterPro" id="IPR006565">
    <property type="entry name" value="BTP"/>
</dbReference>
<dbReference type="InterPro" id="IPR009072">
    <property type="entry name" value="Histone-fold"/>
</dbReference>
<dbReference type="InterPro" id="IPR037818">
    <property type="entry name" value="TAF8"/>
</dbReference>
<dbReference type="InterPro" id="IPR019473">
    <property type="entry name" value="TFIID_su8_C"/>
</dbReference>
<dbReference type="PANTHER" id="PTHR46469">
    <property type="entry name" value="TRANSCRIPTION INITIATION FACTOR TFIID SUBUNIT 8"/>
    <property type="match status" value="1"/>
</dbReference>
<dbReference type="PANTHER" id="PTHR46469:SF1">
    <property type="entry name" value="TRANSCRIPTION INITIATION FACTOR TFIID SUBUNIT 8"/>
    <property type="match status" value="1"/>
</dbReference>
<dbReference type="Pfam" id="PF07524">
    <property type="entry name" value="Bromo_TP"/>
    <property type="match status" value="1"/>
</dbReference>
<dbReference type="Pfam" id="PF10406">
    <property type="entry name" value="TAF8_C"/>
    <property type="match status" value="1"/>
</dbReference>
<dbReference type="SMART" id="SM00576">
    <property type="entry name" value="BTP"/>
    <property type="match status" value="1"/>
</dbReference>
<dbReference type="SUPFAM" id="SSF47113">
    <property type="entry name" value="Histone-fold"/>
    <property type="match status" value="1"/>
</dbReference>
<keyword id="KW-0007">Acetylation</keyword>
<keyword id="KW-0963">Cytoplasm</keyword>
<keyword id="KW-0217">Developmental protein</keyword>
<keyword id="KW-0221">Differentiation</keyword>
<keyword id="KW-0539">Nucleus</keyword>
<keyword id="KW-0597">Phosphoprotein</keyword>
<keyword id="KW-1185">Reference proteome</keyword>
<keyword id="KW-0804">Transcription</keyword>
<keyword id="KW-0805">Transcription regulation</keyword>
<comment type="function">
    <text evidence="2 3">The TFIID basal transcription factor complex plays a major role in the initiation of RNA polymerase II (Pol II)-dependent transcription. TFIID recognizes and binds promoters with or without a TATA box via its subunit TBP, a TATA-box-binding protein, and promotes assembly of the pre-initiation complex (PIC). The TFIID complex consists of TBP and TBP-associated factors (TAFs), including TAF1, TAF2, TAF3, TAF4, TAF5, TAF6, TAF7, TAF8, TAF9, TAF10, TAF11, TAF12 and TAF13. The TFIID complex structure can be divided into 3 modules TFIID-A, TFIID-B, and TFIID-C. TAF8 is involved in forming the TFIID-B module, together with TAF5. Mediates both basal and activator-dependent transcription. Plays a role in the differentiation of preadipocyte fibroblasts to adipocytes, however, does not seem to play a role in differentiation of myoblasts. Required for the integration of TAF10 in the TAF complex (By similarity). May be important for survival of cells of the inner cell mass which constitute the pluripotent cell population of the early embryo (By similarity).</text>
</comment>
<comment type="subunit">
    <text evidence="2">Component of the TFIID basal transcription factor complex, composed of TATA-box-binding protein TBP, and a number of TBP-associated factors (TAFs), including TAF1, TAF2, TAF3, TAF4, TAF5, TAF6, TAF7, TAF8, TAF9, TAF10, TAF11, TAF12 and TAF13. Interacts with TBP, TAF1, TAF6, TAF10, TAF11 and TAF13. Component also of a small TAF complex (SMAT) containing TAF8, TAF10 and SUPT7L. Forms a heterodimer with TAF10. Interaction with TAF10 is mediated mainly via its histone fold domain while interaction with SUPT7L is via its C-terminal region.</text>
</comment>
<comment type="subcellular location">
    <subcellularLocation>
        <location evidence="1">Nucleus</location>
    </subcellularLocation>
    <subcellularLocation>
        <location evidence="1">Cytoplasm</location>
    </subcellularLocation>
    <text evidence="1">Localized in the cytoplasm and transported from the cytoplasm to the nucleus in some cells, possibly depending on the functional or developmental state of the cell.</text>
</comment>
<comment type="similarity">
    <text evidence="6">Belongs to the TAF8 family.</text>
</comment>
<sequence length="310" mass="34227">MADAAATAGAAGSGTRSGSKQSTNPADNYHLARRRTLQVVVSSLLTEAGFESAEKASVETLTEMLQSYISEIGRSAKSYCEHTARTQPTLSDIVVTLVEMGFNVDTLPAYAKRSQRMVITAPPVTNQPVTPKALTAGQNRPHPPHIPSHFPEFPDPHTYIKTPTYREPVSDYQVLREKAASQRRDVERALTRFMAKTGETQSLFKDDVSTFPLIAARPFTIPYLTALLPSELEMQQMEETDSSEQDEQTDTENLPLHISPDDSGAEKENTSVLQQNPSLSGSRNGEESIIDNPYLRPVKKPKIRRKKSLS</sequence>
<proteinExistence type="evidence at transcript level"/>
<protein>
    <recommendedName>
        <fullName>Transcription initiation factor TFIID subunit 8</fullName>
    </recommendedName>
    <alternativeName>
        <fullName>TBP-associated factor 8</fullName>
    </alternativeName>
</protein>